<reference key="1">
    <citation type="submission" date="2008-05" db="EMBL/GenBank/DDBJ databases">
        <title>Complete sequence of Rhodopseudomonas palustris TIE-1.</title>
        <authorList>
            <consortium name="US DOE Joint Genome Institute"/>
            <person name="Lucas S."/>
            <person name="Copeland A."/>
            <person name="Lapidus A."/>
            <person name="Glavina del Rio T."/>
            <person name="Dalin E."/>
            <person name="Tice H."/>
            <person name="Pitluck S."/>
            <person name="Chain P."/>
            <person name="Malfatti S."/>
            <person name="Shin M."/>
            <person name="Vergez L."/>
            <person name="Lang D."/>
            <person name="Schmutz J."/>
            <person name="Larimer F."/>
            <person name="Land M."/>
            <person name="Hauser L."/>
            <person name="Kyrpides N."/>
            <person name="Mikhailova N."/>
            <person name="Emerson D."/>
            <person name="Newman D.K."/>
            <person name="Roden E."/>
            <person name="Richardson P."/>
        </authorList>
    </citation>
    <scope>NUCLEOTIDE SEQUENCE [LARGE SCALE GENOMIC DNA]</scope>
    <source>
        <strain>TIE-1</strain>
    </source>
</reference>
<sequence>MAEKPKKPQKLRARLPRGLADRGPAEIAATRAMVEKIREVYERYGFEPVETPAFEYTDALGKFLPDQDRPNEGVFSLQDDDEQWISLRYDLTAPLARYVAENFDQLPKPYRSYRFGWVFRNEKPGPGRFRQFMQFDADTVGSGSPAADAEMCMMAADTMEALGIPRGSYLVKLNNRKILDGVLEAIGIGGDEHIKQRLVVLRAIDKLDRLGLQGVEQLLGEGRKDESGDFTRGASLNAGQIRDVITLLNFAGWGDIVDGSNTHTLDEWEGLRFSVNSTFSAGIQDLRQITKITEASGYDTGRIRVDNTVVRGLEYYTGPVFEVELLLDTKDEKGRPVRFGSVGGGGRYDGLVSRFRGEPVPATGFSIGVSRLQAALTLIGQLGNKPQAGPVVVTVFGGEIAGYQKMVATLRKAGIRAELYLGNPKHSLGQQMKYADKRNSPCAIIQGSDEKQQGIVQIKDLILGAELASLEKDRDEYLKKQAEAQFSCKEDEMVAKVQELLQRRGVAWG</sequence>
<organism>
    <name type="scientific">Rhodopseudomonas palustris (strain TIE-1)</name>
    <dbReference type="NCBI Taxonomy" id="395960"/>
    <lineage>
        <taxon>Bacteria</taxon>
        <taxon>Pseudomonadati</taxon>
        <taxon>Pseudomonadota</taxon>
        <taxon>Alphaproteobacteria</taxon>
        <taxon>Hyphomicrobiales</taxon>
        <taxon>Nitrobacteraceae</taxon>
        <taxon>Rhodopseudomonas</taxon>
    </lineage>
</organism>
<dbReference type="EC" id="6.1.1.21" evidence="1"/>
<dbReference type="EMBL" id="CP001096">
    <property type="protein sequence ID" value="ACE99908.1"/>
    <property type="molecule type" value="Genomic_DNA"/>
</dbReference>
<dbReference type="RefSeq" id="WP_012494875.1">
    <property type="nucleotide sequence ID" value="NC_011004.1"/>
</dbReference>
<dbReference type="SMR" id="B3QII5"/>
<dbReference type="KEGG" id="rpt:Rpal_1369"/>
<dbReference type="HOGENOM" id="CLU_025113_3_2_5"/>
<dbReference type="OrthoDB" id="9800814at2"/>
<dbReference type="Proteomes" id="UP000001725">
    <property type="component" value="Chromosome"/>
</dbReference>
<dbReference type="GO" id="GO:0005737">
    <property type="term" value="C:cytoplasm"/>
    <property type="evidence" value="ECO:0007669"/>
    <property type="project" value="UniProtKB-SubCell"/>
</dbReference>
<dbReference type="GO" id="GO:0005524">
    <property type="term" value="F:ATP binding"/>
    <property type="evidence" value="ECO:0007669"/>
    <property type="project" value="UniProtKB-UniRule"/>
</dbReference>
<dbReference type="GO" id="GO:0004821">
    <property type="term" value="F:histidine-tRNA ligase activity"/>
    <property type="evidence" value="ECO:0007669"/>
    <property type="project" value="UniProtKB-UniRule"/>
</dbReference>
<dbReference type="GO" id="GO:0006427">
    <property type="term" value="P:histidyl-tRNA aminoacylation"/>
    <property type="evidence" value="ECO:0007669"/>
    <property type="project" value="UniProtKB-UniRule"/>
</dbReference>
<dbReference type="CDD" id="cd00773">
    <property type="entry name" value="HisRS-like_core"/>
    <property type="match status" value="1"/>
</dbReference>
<dbReference type="Gene3D" id="3.40.50.800">
    <property type="entry name" value="Anticodon-binding domain"/>
    <property type="match status" value="1"/>
</dbReference>
<dbReference type="Gene3D" id="3.30.930.10">
    <property type="entry name" value="Bira Bifunctional Protein, Domain 2"/>
    <property type="match status" value="1"/>
</dbReference>
<dbReference type="HAMAP" id="MF_00127">
    <property type="entry name" value="His_tRNA_synth"/>
    <property type="match status" value="1"/>
</dbReference>
<dbReference type="InterPro" id="IPR006195">
    <property type="entry name" value="aa-tRNA-synth_II"/>
</dbReference>
<dbReference type="InterPro" id="IPR045864">
    <property type="entry name" value="aa-tRNA-synth_II/BPL/LPL"/>
</dbReference>
<dbReference type="InterPro" id="IPR004154">
    <property type="entry name" value="Anticodon-bd"/>
</dbReference>
<dbReference type="InterPro" id="IPR036621">
    <property type="entry name" value="Anticodon-bd_dom_sf"/>
</dbReference>
<dbReference type="InterPro" id="IPR015807">
    <property type="entry name" value="His-tRNA-ligase"/>
</dbReference>
<dbReference type="InterPro" id="IPR041715">
    <property type="entry name" value="HisRS-like_core"/>
</dbReference>
<dbReference type="InterPro" id="IPR004516">
    <property type="entry name" value="HisRS/HisZ"/>
</dbReference>
<dbReference type="NCBIfam" id="TIGR00442">
    <property type="entry name" value="hisS"/>
    <property type="match status" value="1"/>
</dbReference>
<dbReference type="PANTHER" id="PTHR11476:SF7">
    <property type="entry name" value="HISTIDINE--TRNA LIGASE"/>
    <property type="match status" value="1"/>
</dbReference>
<dbReference type="PANTHER" id="PTHR11476">
    <property type="entry name" value="HISTIDYL-TRNA SYNTHETASE"/>
    <property type="match status" value="1"/>
</dbReference>
<dbReference type="Pfam" id="PF03129">
    <property type="entry name" value="HGTP_anticodon"/>
    <property type="match status" value="1"/>
</dbReference>
<dbReference type="Pfam" id="PF13393">
    <property type="entry name" value="tRNA-synt_His"/>
    <property type="match status" value="2"/>
</dbReference>
<dbReference type="PIRSF" id="PIRSF001549">
    <property type="entry name" value="His-tRNA_synth"/>
    <property type="match status" value="1"/>
</dbReference>
<dbReference type="SUPFAM" id="SSF52954">
    <property type="entry name" value="Class II aaRS ABD-related"/>
    <property type="match status" value="1"/>
</dbReference>
<dbReference type="SUPFAM" id="SSF55681">
    <property type="entry name" value="Class II aaRS and biotin synthetases"/>
    <property type="match status" value="1"/>
</dbReference>
<dbReference type="PROSITE" id="PS50862">
    <property type="entry name" value="AA_TRNA_LIGASE_II"/>
    <property type="match status" value="1"/>
</dbReference>
<name>SYH_RHOPT</name>
<accession>B3QII5</accession>
<gene>
    <name evidence="1" type="primary">hisS</name>
    <name type="ordered locus">Rpal_1369</name>
</gene>
<keyword id="KW-0030">Aminoacyl-tRNA synthetase</keyword>
<keyword id="KW-0067">ATP-binding</keyword>
<keyword id="KW-0963">Cytoplasm</keyword>
<keyword id="KW-0436">Ligase</keyword>
<keyword id="KW-0547">Nucleotide-binding</keyword>
<keyword id="KW-0648">Protein biosynthesis</keyword>
<protein>
    <recommendedName>
        <fullName evidence="1">Histidine--tRNA ligase</fullName>
        <ecNumber evidence="1">6.1.1.21</ecNumber>
    </recommendedName>
    <alternativeName>
        <fullName evidence="1">Histidyl-tRNA synthetase</fullName>
        <shortName evidence="1">HisRS</shortName>
    </alternativeName>
</protein>
<evidence type="ECO:0000255" key="1">
    <source>
        <dbReference type="HAMAP-Rule" id="MF_00127"/>
    </source>
</evidence>
<proteinExistence type="inferred from homology"/>
<comment type="catalytic activity">
    <reaction evidence="1">
        <text>tRNA(His) + L-histidine + ATP = L-histidyl-tRNA(His) + AMP + diphosphate + H(+)</text>
        <dbReference type="Rhea" id="RHEA:17313"/>
        <dbReference type="Rhea" id="RHEA-COMP:9665"/>
        <dbReference type="Rhea" id="RHEA-COMP:9689"/>
        <dbReference type="ChEBI" id="CHEBI:15378"/>
        <dbReference type="ChEBI" id="CHEBI:30616"/>
        <dbReference type="ChEBI" id="CHEBI:33019"/>
        <dbReference type="ChEBI" id="CHEBI:57595"/>
        <dbReference type="ChEBI" id="CHEBI:78442"/>
        <dbReference type="ChEBI" id="CHEBI:78527"/>
        <dbReference type="ChEBI" id="CHEBI:456215"/>
        <dbReference type="EC" id="6.1.1.21"/>
    </reaction>
</comment>
<comment type="subunit">
    <text evidence="1">Homodimer.</text>
</comment>
<comment type="subcellular location">
    <subcellularLocation>
        <location evidence="1">Cytoplasm</location>
    </subcellularLocation>
</comment>
<comment type="similarity">
    <text evidence="1">Belongs to the class-II aminoacyl-tRNA synthetase family.</text>
</comment>
<feature type="chain" id="PRO_1000095583" description="Histidine--tRNA ligase">
    <location>
        <begin position="1"/>
        <end position="509"/>
    </location>
</feature>